<name>TM175_STRC3</name>
<dbReference type="EMBL" id="CP006259">
    <property type="protein sequence ID" value="AGS72644.1"/>
    <property type="molecule type" value="Genomic_DNA"/>
</dbReference>
<dbReference type="RefSeq" id="WP_020943054.1">
    <property type="nucleotide sequence ID" value="NC_021985.1"/>
</dbReference>
<dbReference type="SMR" id="S5VBU1"/>
<dbReference type="STRING" id="1214242.B446_29190"/>
<dbReference type="TCDB" id="1.A.78.2.3">
    <property type="family name" value="the k+-selective channel in endosomes and lysosomes (kel) family"/>
</dbReference>
<dbReference type="KEGG" id="sci:B446_29190"/>
<dbReference type="PATRIC" id="fig|1214242.5.peg.5979"/>
<dbReference type="eggNOG" id="COG3548">
    <property type="taxonomic scope" value="Bacteria"/>
</dbReference>
<dbReference type="HOGENOM" id="CLU_090238_0_0_11"/>
<dbReference type="Proteomes" id="UP000015423">
    <property type="component" value="Chromosome"/>
</dbReference>
<dbReference type="GO" id="GO:0016020">
    <property type="term" value="C:membrane"/>
    <property type="evidence" value="ECO:0007669"/>
    <property type="project" value="UniProtKB-SubCell"/>
</dbReference>
<dbReference type="GO" id="GO:0042802">
    <property type="term" value="F:identical protein binding"/>
    <property type="evidence" value="ECO:0000353"/>
    <property type="project" value="IntAct"/>
</dbReference>
<dbReference type="GO" id="GO:0022841">
    <property type="term" value="F:potassium ion leak channel activity"/>
    <property type="evidence" value="ECO:0000304"/>
    <property type="project" value="UniProtKB"/>
</dbReference>
<dbReference type="GO" id="GO:0015252">
    <property type="term" value="F:proton channel activity"/>
    <property type="evidence" value="ECO:0007669"/>
    <property type="project" value="InterPro"/>
</dbReference>
<dbReference type="GO" id="GO:0071805">
    <property type="term" value="P:potassium ion transmembrane transport"/>
    <property type="evidence" value="ECO:0000304"/>
    <property type="project" value="UniProtKB"/>
</dbReference>
<dbReference type="GO" id="GO:0051289">
    <property type="term" value="P:protein homotetramerization"/>
    <property type="evidence" value="ECO:0000314"/>
    <property type="project" value="UniProtKB"/>
</dbReference>
<dbReference type="InterPro" id="IPR010617">
    <property type="entry name" value="TMEM175-like"/>
</dbReference>
<dbReference type="PANTHER" id="PTHR31462">
    <property type="entry name" value="ENDOSOMAL/LYSOSOMAL POTASSIUM CHANNEL TMEM175"/>
    <property type="match status" value="1"/>
</dbReference>
<dbReference type="PANTHER" id="PTHR31462:SF5">
    <property type="entry name" value="ENDOSOMAL_LYSOSOMAL PROTON CHANNEL TMEM175"/>
    <property type="match status" value="1"/>
</dbReference>
<dbReference type="Pfam" id="PF06736">
    <property type="entry name" value="TMEM175"/>
    <property type="match status" value="1"/>
</dbReference>
<comment type="function">
    <text evidence="6">Potassium channel.</text>
</comment>
<comment type="catalytic activity">
    <reaction evidence="6">
        <text>K(+)(in) = K(+)(out)</text>
        <dbReference type="Rhea" id="RHEA:29463"/>
        <dbReference type="ChEBI" id="CHEBI:29103"/>
    </reaction>
</comment>
<comment type="subunit">
    <text evidence="4">Homotetramer (PubMed:28723891).</text>
</comment>
<comment type="interaction">
    <interactant intactId="EBI-20710485">
        <id>S5VBU1</id>
    </interactant>
    <interactant intactId="EBI-20710485">
        <id>S5VBU1</id>
        <label>B446_29190</label>
    </interactant>
    <organismsDiffer>false</organismsDiffer>
    <experiments>2</experiments>
</comment>
<comment type="subcellular location">
    <subcellularLocation>
        <location evidence="3">Membrane</location>
        <topology evidence="3">Multi-pass membrane protein</topology>
    </subcellularLocation>
</comment>
<comment type="domain">
    <text evidence="1">The six transmembrane regions are tightly packed within each subunit without undergoing domain swapping. Transmembranes TM1-TM3 are positioned on the inner circle of the channel tetramer and participate in inter-subunit interactions that are central to the assembly of the ion conduction pore. The RxxxFSD motif within transmembrane TM1 coordinates a network of specific inter- and intra-subunit interactions with other conserved residues on TM2 and TM3 and plays a key role in the tetrameric assembly of the channel. Transmembrane TM4-TM6 are positioned on the periphery of the channel and do not contribute to contacts with neighboring subunits. Transmembranes TM1 and TM2 are linked by an extended strand-like tail and two short helices (H1 and H2) which protrude outwards from the main body of the transmembrane domain and enclose the external open entrance of the ion conduction pore in the channel tetramer. Transmembrane TM1 forms the pore-lining inner helix at the center of the channel, creating an hourglass-shaped ion permeation pathway in the channel tetramer. Three hydrophobic residues on the C-terminal half of the TM1 helix form a bottleneck along the ion conduction pathway and serve as the selectivity filter of the channel. Ile-17 is probably responsible for channel selectivity.</text>
</comment>
<comment type="similarity">
    <text evidence="5">Belongs to the TMEM175 family.</text>
</comment>
<protein>
    <recommendedName>
        <fullName evidence="5">Potassium channel B446_29190</fullName>
    </recommendedName>
</protein>
<keyword id="KW-0407">Ion channel</keyword>
<keyword id="KW-0406">Ion transport</keyword>
<keyword id="KW-0472">Membrane</keyword>
<keyword id="KW-0630">Potassium</keyword>
<keyword id="KW-0631">Potassium channel</keyword>
<keyword id="KW-0633">Potassium transport</keyword>
<keyword id="KW-1185">Reference proteome</keyword>
<keyword id="KW-0812">Transmembrane</keyword>
<keyword id="KW-1133">Transmembrane helix</keyword>
<keyword id="KW-0813">Transport</keyword>
<feature type="chain" id="PRO_0000434744" description="Potassium channel B446_29190">
    <location>
        <begin position="1"/>
        <end position="206"/>
    </location>
</feature>
<feature type="topological domain" description="Cytoplasmic" evidence="1">
    <location>
        <position position="1"/>
    </location>
</feature>
<feature type="transmembrane region" description="Helical; Name=TM1" evidence="1">
    <location>
        <begin position="2"/>
        <end position="25"/>
    </location>
</feature>
<feature type="topological domain" description="Extracellular" evidence="1">
    <location>
        <begin position="26"/>
        <end position="44"/>
    </location>
</feature>
<feature type="transmembrane region" description="Helical; Name=TM2" evidence="1">
    <location>
        <begin position="45"/>
        <end position="70"/>
    </location>
</feature>
<feature type="topological domain" description="Cytoplasmic" evidence="1">
    <location>
        <begin position="71"/>
        <end position="76"/>
    </location>
</feature>
<feature type="transmembrane region" description="Helical; Name=TM3" evidence="1">
    <location>
        <begin position="77"/>
        <end position="102"/>
    </location>
</feature>
<feature type="topological domain" description="Extracellular" evidence="1">
    <location>
        <begin position="103"/>
        <end position="110"/>
    </location>
</feature>
<feature type="transmembrane region" description="Helical; Name=TM4" evidence="1">
    <location>
        <begin position="111"/>
        <end position="135"/>
    </location>
</feature>
<feature type="topological domain" description="Cytoplasmic" evidence="1">
    <location>
        <begin position="136"/>
        <end position="147"/>
    </location>
</feature>
<feature type="transmembrane region" description="Helical; Name=TM5" evidence="1">
    <location>
        <begin position="148"/>
        <end position="174"/>
    </location>
</feature>
<feature type="topological domain" description="Extracellular" evidence="1">
    <location>
        <begin position="175"/>
        <end position="176"/>
    </location>
</feature>
<feature type="transmembrane region" description="Helical; Name=TM6" evidence="1">
    <location>
        <begin position="177"/>
        <end position="192"/>
    </location>
</feature>
<feature type="topological domain" description="Cytoplasmic" evidence="1">
    <location>
        <begin position="193"/>
        <end position="206"/>
    </location>
</feature>
<feature type="region of interest" description="Short helix H1" evidence="1">
    <location>
        <begin position="31"/>
        <end position="34"/>
    </location>
</feature>
<feature type="region of interest" description="Short helix H2" evidence="1">
    <location>
        <begin position="36"/>
        <end position="42"/>
    </location>
</feature>
<feature type="short sequence motif" description="RxxxFSD motif" evidence="2">
    <location>
        <begin position="6"/>
        <end position="12"/>
    </location>
</feature>
<feature type="site" description="Hydrophobic filter residue 1" evidence="1">
    <location>
        <position position="17"/>
    </location>
</feature>
<feature type="site" description="Hydrophobic filter residue 2" evidence="1">
    <location>
        <position position="21"/>
    </location>
</feature>
<feature type="site" description="Hydrophobic filter residue 3" evidence="1">
    <location>
        <position position="24"/>
    </location>
</feature>
<reference key="1">
    <citation type="submission" date="2012-10" db="EMBL/GenBank/DDBJ databases">
        <title>The complete genome sequence of Streptomyces collinus Tu 365.</title>
        <authorList>
            <person name="Ruckert C."/>
            <person name="Szczepanowski R."/>
            <person name="Goesmann A."/>
            <person name="Pross E.K."/>
            <person name="Musiol E.M."/>
            <person name="Blin K."/>
            <person name="Wohlleben W."/>
            <person name="Puhler A."/>
            <person name="Weber T."/>
            <person name="Kalinowski J."/>
        </authorList>
    </citation>
    <scope>NUCLEOTIDE SEQUENCE [LARGE SCALE GENOMIC DNA]</scope>
    <source>
        <strain evidence="7">DSM 40733 / Tue 365</strain>
    </source>
</reference>
<reference key="2">
    <citation type="journal article" date="2015" name="Cell">
        <title>TMEM175 is an organelle K(+) channel regulating lysosomal function.</title>
        <authorList>
            <person name="Cang C."/>
            <person name="Aranda K."/>
            <person name="Seo Y.J."/>
            <person name="Gasnier B."/>
            <person name="Ren D."/>
        </authorList>
    </citation>
    <scope>FUNCTION</scope>
    <scope>TRANSPORTER ACTIVITY</scope>
</reference>
<reference key="3">
    <citation type="journal article" date="2017" name="Nature">
        <title>The lysosomal potassium channel TMEM175 adopts a novel tetrameric architecture.</title>
        <authorList>
            <person name="Lee C."/>
            <person name="Guo J."/>
            <person name="Zeng W."/>
            <person name="Kim S."/>
            <person name="She J."/>
            <person name="Cang C."/>
            <person name="Ren D."/>
            <person name="Jiang Y."/>
        </authorList>
    </citation>
    <scope>SUBUNIT</scope>
</reference>
<gene>
    <name evidence="7" type="ORF">B446_29190</name>
</gene>
<proteinExistence type="evidence at protein level"/>
<evidence type="ECO:0000250" key="1">
    <source>
        <dbReference type="UniProtKB" id="K9UJK2"/>
    </source>
</evidence>
<evidence type="ECO:0000250" key="2">
    <source>
        <dbReference type="UniProtKB" id="Q9BSA9"/>
    </source>
</evidence>
<evidence type="ECO:0000255" key="3"/>
<evidence type="ECO:0000269" key="4">
    <source>
    </source>
</evidence>
<evidence type="ECO:0000305" key="5"/>
<evidence type="ECO:0000305" key="6">
    <source>
    </source>
</evidence>
<evidence type="ECO:0000312" key="7">
    <source>
        <dbReference type="EMBL" id="AGS72644.1"/>
    </source>
</evidence>
<organism>
    <name type="scientific">Streptomyces collinus (strain DSM 40733 / Tue 365)</name>
    <dbReference type="NCBI Taxonomy" id="1214242"/>
    <lineage>
        <taxon>Bacteria</taxon>
        <taxon>Bacillati</taxon>
        <taxon>Actinomycetota</taxon>
        <taxon>Actinomycetes</taxon>
        <taxon>Kitasatosporales</taxon>
        <taxon>Streptomycetaceae</taxon>
        <taxon>Streptomyces</taxon>
    </lineage>
</organism>
<accession>S5VBU1</accession>
<sequence length="206" mass="22387">MNESGRVEAFSDGVFAIAITLLILDIKVPKADGPGGLWHALGAQWPSYAAYVVSFLVIGIMWVNHHQVFSYVARVDRALMFLNLLVLMVVAAVPWPTAMLAEYLREDRASHVAAAVYSLVMVAMALAFQALWWHLTRTGHLFDPRVDAPAARATRIRFALGSLGYPLTVGLAFVSAPLTLAAHGLLALYYGFNQVPVPTREAAAPS</sequence>